<accession>A9FGS5</accession>
<protein>
    <recommendedName>
        <fullName evidence="1">ATP synthase subunit a</fullName>
    </recommendedName>
    <alternativeName>
        <fullName evidence="1">ATP synthase F0 sector subunit a</fullName>
    </alternativeName>
    <alternativeName>
        <fullName evidence="1">F-ATPase subunit 6</fullName>
    </alternativeName>
</protein>
<feature type="chain" id="PRO_0000362472" description="ATP synthase subunit a">
    <location>
        <begin position="1"/>
        <end position="255"/>
    </location>
</feature>
<feature type="transmembrane region" description="Helical" evidence="1">
    <location>
        <begin position="40"/>
        <end position="60"/>
    </location>
</feature>
<feature type="transmembrane region" description="Helical" evidence="1">
    <location>
        <begin position="109"/>
        <end position="129"/>
    </location>
</feature>
<feature type="transmembrane region" description="Helical" evidence="1">
    <location>
        <begin position="135"/>
        <end position="155"/>
    </location>
</feature>
<feature type="transmembrane region" description="Helical" evidence="1">
    <location>
        <begin position="163"/>
        <end position="183"/>
    </location>
</feature>
<feature type="transmembrane region" description="Helical" evidence="1">
    <location>
        <begin position="196"/>
        <end position="218"/>
    </location>
</feature>
<feature type="transmembrane region" description="Helical" evidence="1">
    <location>
        <begin position="230"/>
        <end position="250"/>
    </location>
</feature>
<proteinExistence type="inferred from homology"/>
<organism>
    <name type="scientific">Sorangium cellulosum (strain So ce56)</name>
    <name type="common">Polyangium cellulosum (strain So ce56)</name>
    <dbReference type="NCBI Taxonomy" id="448385"/>
    <lineage>
        <taxon>Bacteria</taxon>
        <taxon>Pseudomonadati</taxon>
        <taxon>Myxococcota</taxon>
        <taxon>Polyangia</taxon>
        <taxon>Polyangiales</taxon>
        <taxon>Polyangiaceae</taxon>
        <taxon>Sorangium</taxon>
    </lineage>
</organism>
<comment type="function">
    <text evidence="1">Key component of the proton channel; it plays a direct role in the translocation of protons across the membrane.</text>
</comment>
<comment type="subunit">
    <text evidence="1">F-type ATPases have 2 components, CF(1) - the catalytic core - and CF(0) - the membrane proton channel. CF(1) has five subunits: alpha(3), beta(3), gamma(1), delta(1), epsilon(1). CF(0) has three main subunits: a(1), b(2) and c(9-12). The alpha and beta chains form an alternating ring which encloses part of the gamma chain. CF(1) is attached to CF(0) by a central stalk formed by the gamma and epsilon chains, while a peripheral stalk is formed by the delta and b chains.</text>
</comment>
<comment type="subcellular location">
    <subcellularLocation>
        <location evidence="1">Cell inner membrane</location>
        <topology evidence="1">Multi-pass membrane protein</topology>
    </subcellularLocation>
</comment>
<comment type="similarity">
    <text evidence="1">Belongs to the ATPase A chain family.</text>
</comment>
<sequence>MPEHTGFLTYLLAQLPGLRENARNIGKTFIGHHTVDYRGTEPIFMSLLIMVLFVLLASEVRGQYRRLNESVIPEDKLTLRTFFEAFFGYFYGMARDVMGPANAKRYFPLIGGSAAFIFFSNASALIPGVNPPTSNLNITIGCAVVVFVLFNYYGLKENGWSYVAHLAGPKWYLAPLIFPIEVISTCVRPVTLSIRLMLNIGVDHLVASIFLGLVALFVPVPLMFLAIIVIVVQTLVFCLLSCIYIGLATEKADHH</sequence>
<gene>
    <name evidence="1" type="primary">atpB</name>
    <name type="ordered locus">sce7979</name>
</gene>
<evidence type="ECO:0000255" key="1">
    <source>
        <dbReference type="HAMAP-Rule" id="MF_01393"/>
    </source>
</evidence>
<dbReference type="EMBL" id="AM746676">
    <property type="protein sequence ID" value="CAN98149.1"/>
    <property type="molecule type" value="Genomic_DNA"/>
</dbReference>
<dbReference type="RefSeq" id="WP_012240588.1">
    <property type="nucleotide sequence ID" value="NC_010162.1"/>
</dbReference>
<dbReference type="SMR" id="A9FGS5"/>
<dbReference type="STRING" id="448385.sce7979"/>
<dbReference type="KEGG" id="scl:sce7979"/>
<dbReference type="eggNOG" id="COG0356">
    <property type="taxonomic scope" value="Bacteria"/>
</dbReference>
<dbReference type="HOGENOM" id="CLU_041018_2_2_7"/>
<dbReference type="OrthoDB" id="9789241at2"/>
<dbReference type="BioCyc" id="SCEL448385:SCE_RS40840-MONOMER"/>
<dbReference type="Proteomes" id="UP000002139">
    <property type="component" value="Chromosome"/>
</dbReference>
<dbReference type="GO" id="GO:0005886">
    <property type="term" value="C:plasma membrane"/>
    <property type="evidence" value="ECO:0007669"/>
    <property type="project" value="UniProtKB-SubCell"/>
</dbReference>
<dbReference type="GO" id="GO:0045259">
    <property type="term" value="C:proton-transporting ATP synthase complex"/>
    <property type="evidence" value="ECO:0007669"/>
    <property type="project" value="UniProtKB-KW"/>
</dbReference>
<dbReference type="GO" id="GO:0046933">
    <property type="term" value="F:proton-transporting ATP synthase activity, rotational mechanism"/>
    <property type="evidence" value="ECO:0007669"/>
    <property type="project" value="UniProtKB-UniRule"/>
</dbReference>
<dbReference type="GO" id="GO:0042777">
    <property type="term" value="P:proton motive force-driven plasma membrane ATP synthesis"/>
    <property type="evidence" value="ECO:0007669"/>
    <property type="project" value="TreeGrafter"/>
</dbReference>
<dbReference type="CDD" id="cd00310">
    <property type="entry name" value="ATP-synt_Fo_a_6"/>
    <property type="match status" value="1"/>
</dbReference>
<dbReference type="Gene3D" id="1.20.120.220">
    <property type="entry name" value="ATP synthase, F0 complex, subunit A"/>
    <property type="match status" value="1"/>
</dbReference>
<dbReference type="HAMAP" id="MF_01393">
    <property type="entry name" value="ATP_synth_a_bact"/>
    <property type="match status" value="1"/>
</dbReference>
<dbReference type="InterPro" id="IPR045082">
    <property type="entry name" value="ATP_syn_F0_a_bact/chloroplast"/>
</dbReference>
<dbReference type="InterPro" id="IPR000568">
    <property type="entry name" value="ATP_synth_F0_asu"/>
</dbReference>
<dbReference type="InterPro" id="IPR035908">
    <property type="entry name" value="F0_ATP_A_sf"/>
</dbReference>
<dbReference type="NCBIfam" id="TIGR01131">
    <property type="entry name" value="ATP_synt_6_or_A"/>
    <property type="match status" value="1"/>
</dbReference>
<dbReference type="PANTHER" id="PTHR42823">
    <property type="entry name" value="ATP SYNTHASE SUBUNIT A, CHLOROPLASTIC"/>
    <property type="match status" value="1"/>
</dbReference>
<dbReference type="PANTHER" id="PTHR42823:SF3">
    <property type="entry name" value="ATP SYNTHASE SUBUNIT A, CHLOROPLASTIC"/>
    <property type="match status" value="1"/>
</dbReference>
<dbReference type="Pfam" id="PF00119">
    <property type="entry name" value="ATP-synt_A"/>
    <property type="match status" value="1"/>
</dbReference>
<dbReference type="PRINTS" id="PR00123">
    <property type="entry name" value="ATPASEA"/>
</dbReference>
<dbReference type="SUPFAM" id="SSF81336">
    <property type="entry name" value="F1F0 ATP synthase subunit A"/>
    <property type="match status" value="1"/>
</dbReference>
<reference key="1">
    <citation type="journal article" date="2007" name="Nat. Biotechnol.">
        <title>Complete genome sequence of the myxobacterium Sorangium cellulosum.</title>
        <authorList>
            <person name="Schneiker S."/>
            <person name="Perlova O."/>
            <person name="Kaiser O."/>
            <person name="Gerth K."/>
            <person name="Alici A."/>
            <person name="Altmeyer M.O."/>
            <person name="Bartels D."/>
            <person name="Bekel T."/>
            <person name="Beyer S."/>
            <person name="Bode E."/>
            <person name="Bode H.B."/>
            <person name="Bolten C.J."/>
            <person name="Choudhuri J.V."/>
            <person name="Doss S."/>
            <person name="Elnakady Y.A."/>
            <person name="Frank B."/>
            <person name="Gaigalat L."/>
            <person name="Goesmann A."/>
            <person name="Groeger C."/>
            <person name="Gross F."/>
            <person name="Jelsbak L."/>
            <person name="Jelsbak L."/>
            <person name="Kalinowski J."/>
            <person name="Kegler C."/>
            <person name="Knauber T."/>
            <person name="Konietzny S."/>
            <person name="Kopp M."/>
            <person name="Krause L."/>
            <person name="Krug D."/>
            <person name="Linke B."/>
            <person name="Mahmud T."/>
            <person name="Martinez-Arias R."/>
            <person name="McHardy A.C."/>
            <person name="Merai M."/>
            <person name="Meyer F."/>
            <person name="Mormann S."/>
            <person name="Munoz-Dorado J."/>
            <person name="Perez J."/>
            <person name="Pradella S."/>
            <person name="Rachid S."/>
            <person name="Raddatz G."/>
            <person name="Rosenau F."/>
            <person name="Rueckert C."/>
            <person name="Sasse F."/>
            <person name="Scharfe M."/>
            <person name="Schuster S.C."/>
            <person name="Suen G."/>
            <person name="Treuner-Lange A."/>
            <person name="Velicer G.J."/>
            <person name="Vorholter F.-J."/>
            <person name="Weissman K.J."/>
            <person name="Welch R.D."/>
            <person name="Wenzel S.C."/>
            <person name="Whitworth D.E."/>
            <person name="Wilhelm S."/>
            <person name="Wittmann C."/>
            <person name="Bloecker H."/>
            <person name="Puehler A."/>
            <person name="Mueller R."/>
        </authorList>
    </citation>
    <scope>NUCLEOTIDE SEQUENCE [LARGE SCALE GENOMIC DNA]</scope>
    <source>
        <strain>So ce56</strain>
    </source>
</reference>
<keyword id="KW-0066">ATP synthesis</keyword>
<keyword id="KW-0997">Cell inner membrane</keyword>
<keyword id="KW-1003">Cell membrane</keyword>
<keyword id="KW-0138">CF(0)</keyword>
<keyword id="KW-0375">Hydrogen ion transport</keyword>
<keyword id="KW-0406">Ion transport</keyword>
<keyword id="KW-0472">Membrane</keyword>
<keyword id="KW-1185">Reference proteome</keyword>
<keyword id="KW-0812">Transmembrane</keyword>
<keyword id="KW-1133">Transmembrane helix</keyword>
<keyword id="KW-0813">Transport</keyword>
<name>ATP6_SORC5</name>